<proteinExistence type="inferred from homology"/>
<evidence type="ECO:0000255" key="1">
    <source>
        <dbReference type="HAMAP-Rule" id="MF_00514"/>
    </source>
</evidence>
<evidence type="ECO:0000305" key="2"/>
<feature type="chain" id="PRO_0000177446" description="Large ribosomal subunit protein bL35">
    <location>
        <begin position="1"/>
        <end position="66"/>
    </location>
</feature>
<protein>
    <recommendedName>
        <fullName evidence="1">Large ribosomal subunit protein bL35</fullName>
    </recommendedName>
    <alternativeName>
        <fullName evidence="2">50S ribosomal protein L35</fullName>
    </alternativeName>
</protein>
<gene>
    <name evidence="1" type="primary">rpmI</name>
    <name type="ordered locus">TDE_2155</name>
</gene>
<accession>Q73KR2</accession>
<name>RL35_TREDE</name>
<reference key="1">
    <citation type="journal article" date="2004" name="Proc. Natl. Acad. Sci. U.S.A.">
        <title>Comparison of the genome of the oral pathogen Treponema denticola with other spirochete genomes.</title>
        <authorList>
            <person name="Seshadri R."/>
            <person name="Myers G.S.A."/>
            <person name="Tettelin H."/>
            <person name="Eisen J.A."/>
            <person name="Heidelberg J.F."/>
            <person name="Dodson R.J."/>
            <person name="Davidsen T.M."/>
            <person name="DeBoy R.T."/>
            <person name="Fouts D.E."/>
            <person name="Haft D.H."/>
            <person name="Selengut J."/>
            <person name="Ren Q."/>
            <person name="Brinkac L.M."/>
            <person name="Madupu R."/>
            <person name="Kolonay J.F."/>
            <person name="Durkin S.A."/>
            <person name="Daugherty S.C."/>
            <person name="Shetty J."/>
            <person name="Shvartsbeyn A."/>
            <person name="Gebregeorgis E."/>
            <person name="Geer K."/>
            <person name="Tsegaye G."/>
            <person name="Malek J.A."/>
            <person name="Ayodeji B."/>
            <person name="Shatsman S."/>
            <person name="McLeod M.P."/>
            <person name="Smajs D."/>
            <person name="Howell J.K."/>
            <person name="Pal S."/>
            <person name="Amin A."/>
            <person name="Vashisth P."/>
            <person name="McNeill T.Z."/>
            <person name="Xiang Q."/>
            <person name="Sodergren E."/>
            <person name="Baca E."/>
            <person name="Weinstock G.M."/>
            <person name="Norris S.J."/>
            <person name="Fraser C.M."/>
            <person name="Paulsen I.T."/>
        </authorList>
    </citation>
    <scope>NUCLEOTIDE SEQUENCE [LARGE SCALE GENOMIC DNA]</scope>
    <source>
        <strain>ATCC 35405 / DSM 14222 / CIP 103919 / JCM 8153 / KCTC 15104</strain>
    </source>
</reference>
<dbReference type="EMBL" id="AE017226">
    <property type="protein sequence ID" value="AAS12675.1"/>
    <property type="molecule type" value="Genomic_DNA"/>
</dbReference>
<dbReference type="RefSeq" id="NP_972756.1">
    <property type="nucleotide sequence ID" value="NC_002967.9"/>
</dbReference>
<dbReference type="RefSeq" id="WP_002679992.1">
    <property type="nucleotide sequence ID" value="NC_002967.9"/>
</dbReference>
<dbReference type="SMR" id="Q73KR2"/>
<dbReference type="STRING" id="243275.TDE_2155"/>
<dbReference type="PaxDb" id="243275-TDE_2155"/>
<dbReference type="GeneID" id="2739141"/>
<dbReference type="KEGG" id="tde:TDE_2155"/>
<dbReference type="PATRIC" id="fig|243275.7.peg.2036"/>
<dbReference type="eggNOG" id="COG0291">
    <property type="taxonomic scope" value="Bacteria"/>
</dbReference>
<dbReference type="HOGENOM" id="CLU_169643_4_2_12"/>
<dbReference type="OrthoDB" id="47476at2"/>
<dbReference type="Proteomes" id="UP000008212">
    <property type="component" value="Chromosome"/>
</dbReference>
<dbReference type="GO" id="GO:0022625">
    <property type="term" value="C:cytosolic large ribosomal subunit"/>
    <property type="evidence" value="ECO:0007669"/>
    <property type="project" value="TreeGrafter"/>
</dbReference>
<dbReference type="GO" id="GO:0003735">
    <property type="term" value="F:structural constituent of ribosome"/>
    <property type="evidence" value="ECO:0007669"/>
    <property type="project" value="InterPro"/>
</dbReference>
<dbReference type="GO" id="GO:0006412">
    <property type="term" value="P:translation"/>
    <property type="evidence" value="ECO:0007669"/>
    <property type="project" value="UniProtKB-UniRule"/>
</dbReference>
<dbReference type="FunFam" id="4.10.410.60:FF:000001">
    <property type="entry name" value="50S ribosomal protein L35"/>
    <property type="match status" value="1"/>
</dbReference>
<dbReference type="Gene3D" id="4.10.410.60">
    <property type="match status" value="1"/>
</dbReference>
<dbReference type="HAMAP" id="MF_00514">
    <property type="entry name" value="Ribosomal_bL35"/>
    <property type="match status" value="1"/>
</dbReference>
<dbReference type="InterPro" id="IPR001706">
    <property type="entry name" value="Ribosomal_bL35"/>
</dbReference>
<dbReference type="InterPro" id="IPR021137">
    <property type="entry name" value="Ribosomal_bL35-like"/>
</dbReference>
<dbReference type="InterPro" id="IPR018265">
    <property type="entry name" value="Ribosomal_bL35_CS"/>
</dbReference>
<dbReference type="InterPro" id="IPR037229">
    <property type="entry name" value="Ribosomal_bL35_sf"/>
</dbReference>
<dbReference type="NCBIfam" id="TIGR00001">
    <property type="entry name" value="rpmI_bact"/>
    <property type="match status" value="1"/>
</dbReference>
<dbReference type="PANTHER" id="PTHR33343">
    <property type="entry name" value="54S RIBOSOMAL PROTEIN BL35M"/>
    <property type="match status" value="1"/>
</dbReference>
<dbReference type="PANTHER" id="PTHR33343:SF1">
    <property type="entry name" value="LARGE RIBOSOMAL SUBUNIT PROTEIN BL35M"/>
    <property type="match status" value="1"/>
</dbReference>
<dbReference type="Pfam" id="PF01632">
    <property type="entry name" value="Ribosomal_L35p"/>
    <property type="match status" value="1"/>
</dbReference>
<dbReference type="PRINTS" id="PR00064">
    <property type="entry name" value="RIBOSOMALL35"/>
</dbReference>
<dbReference type="SUPFAM" id="SSF143034">
    <property type="entry name" value="L35p-like"/>
    <property type="match status" value="1"/>
</dbReference>
<dbReference type="PROSITE" id="PS00936">
    <property type="entry name" value="RIBOSOMAL_L35"/>
    <property type="match status" value="1"/>
</dbReference>
<organism>
    <name type="scientific">Treponema denticola (strain ATCC 35405 / DSM 14222 / CIP 103919 / JCM 8153 / KCTC 15104)</name>
    <dbReference type="NCBI Taxonomy" id="243275"/>
    <lineage>
        <taxon>Bacteria</taxon>
        <taxon>Pseudomonadati</taxon>
        <taxon>Spirochaetota</taxon>
        <taxon>Spirochaetia</taxon>
        <taxon>Spirochaetales</taxon>
        <taxon>Treponemataceae</taxon>
        <taxon>Treponema</taxon>
    </lineage>
</organism>
<comment type="similarity">
    <text evidence="1">Belongs to the bacterial ribosomal protein bL35 family.</text>
</comment>
<sequence length="66" mass="7669">MPKMKSKRAAKKRFSITASGKVKYKQMNKGHIMTKKSQKRVRRLKKSAILSEADSMKMRKQLLPYG</sequence>
<keyword id="KW-1185">Reference proteome</keyword>
<keyword id="KW-0687">Ribonucleoprotein</keyword>
<keyword id="KW-0689">Ribosomal protein</keyword>